<comment type="function">
    <text evidence="1">One of two assembly initiator proteins, it binds directly to the 5'-end of the 23S rRNA, where it nucleates assembly of the 50S subunit.</text>
</comment>
<comment type="function">
    <text evidence="1">One of the proteins that surrounds the polypeptide exit tunnel on the outside of the subunit.</text>
</comment>
<comment type="subunit">
    <text evidence="1">Part of the 50S ribosomal subunit.</text>
</comment>
<comment type="similarity">
    <text evidence="1">Belongs to the universal ribosomal protein uL24 family.</text>
</comment>
<organism>
    <name type="scientific">Vesicomyosocius okutanii subsp. Calyptogena okutanii (strain HA)</name>
    <dbReference type="NCBI Taxonomy" id="412965"/>
    <lineage>
        <taxon>Bacteria</taxon>
        <taxon>Pseudomonadati</taxon>
        <taxon>Pseudomonadota</taxon>
        <taxon>Gammaproteobacteria</taxon>
        <taxon>Candidatus Pseudothioglobaceae</taxon>
        <taxon>Candidatus Vesicomyosocius</taxon>
    </lineage>
</organism>
<keyword id="KW-1185">Reference proteome</keyword>
<keyword id="KW-0687">Ribonucleoprotein</keyword>
<keyword id="KW-0689">Ribosomal protein</keyword>
<keyword id="KW-0694">RNA-binding</keyword>
<keyword id="KW-0699">rRNA-binding</keyword>
<evidence type="ECO:0000255" key="1">
    <source>
        <dbReference type="HAMAP-Rule" id="MF_01326"/>
    </source>
</evidence>
<evidence type="ECO:0000305" key="2"/>
<feature type="chain" id="PRO_1000052334" description="Large ribosomal subunit protein uL24">
    <location>
        <begin position="1"/>
        <end position="103"/>
    </location>
</feature>
<gene>
    <name evidence="1" type="primary">rplX</name>
    <name type="ordered locus">COSY_0180</name>
</gene>
<protein>
    <recommendedName>
        <fullName evidence="1">Large ribosomal subunit protein uL24</fullName>
    </recommendedName>
    <alternativeName>
        <fullName evidence="2">50S ribosomal protein L24</fullName>
    </alternativeName>
</protein>
<name>RL24_VESOH</name>
<proteinExistence type="inferred from homology"/>
<sequence>MQKIKSNDEIIIIAGKDKGSIGIVTKIVDSKVLVEGLNLAKKHVKPNPNKGVTGGITEIEMPLSISNVAIYNPTTKKADRVGIRTSKNGIKERFFKSNDKSII</sequence>
<dbReference type="EMBL" id="AP009247">
    <property type="protein sequence ID" value="BAF61310.1"/>
    <property type="molecule type" value="Genomic_DNA"/>
</dbReference>
<dbReference type="RefSeq" id="WP_011929580.1">
    <property type="nucleotide sequence ID" value="NC_009465.1"/>
</dbReference>
<dbReference type="SMR" id="A5CXL5"/>
<dbReference type="STRING" id="412965.COSY_0180"/>
<dbReference type="KEGG" id="vok:COSY_0180"/>
<dbReference type="eggNOG" id="COG0198">
    <property type="taxonomic scope" value="Bacteria"/>
</dbReference>
<dbReference type="HOGENOM" id="CLU_093315_2_2_6"/>
<dbReference type="OrthoDB" id="9807419at2"/>
<dbReference type="Proteomes" id="UP000000247">
    <property type="component" value="Chromosome"/>
</dbReference>
<dbReference type="GO" id="GO:1990904">
    <property type="term" value="C:ribonucleoprotein complex"/>
    <property type="evidence" value="ECO:0007669"/>
    <property type="project" value="UniProtKB-KW"/>
</dbReference>
<dbReference type="GO" id="GO:0005840">
    <property type="term" value="C:ribosome"/>
    <property type="evidence" value="ECO:0007669"/>
    <property type="project" value="UniProtKB-KW"/>
</dbReference>
<dbReference type="GO" id="GO:0019843">
    <property type="term" value="F:rRNA binding"/>
    <property type="evidence" value="ECO:0007669"/>
    <property type="project" value="UniProtKB-UniRule"/>
</dbReference>
<dbReference type="GO" id="GO:0003735">
    <property type="term" value="F:structural constituent of ribosome"/>
    <property type="evidence" value="ECO:0007669"/>
    <property type="project" value="InterPro"/>
</dbReference>
<dbReference type="GO" id="GO:0006412">
    <property type="term" value="P:translation"/>
    <property type="evidence" value="ECO:0007669"/>
    <property type="project" value="UniProtKB-UniRule"/>
</dbReference>
<dbReference type="CDD" id="cd06089">
    <property type="entry name" value="KOW_RPL26"/>
    <property type="match status" value="1"/>
</dbReference>
<dbReference type="Gene3D" id="2.30.30.30">
    <property type="match status" value="1"/>
</dbReference>
<dbReference type="HAMAP" id="MF_01326_B">
    <property type="entry name" value="Ribosomal_uL24_B"/>
    <property type="match status" value="1"/>
</dbReference>
<dbReference type="InterPro" id="IPR005824">
    <property type="entry name" value="KOW"/>
</dbReference>
<dbReference type="InterPro" id="IPR014722">
    <property type="entry name" value="Rib_uL2_dom2"/>
</dbReference>
<dbReference type="InterPro" id="IPR003256">
    <property type="entry name" value="Ribosomal_uL24"/>
</dbReference>
<dbReference type="InterPro" id="IPR005825">
    <property type="entry name" value="Ribosomal_uL24_CS"/>
</dbReference>
<dbReference type="InterPro" id="IPR041988">
    <property type="entry name" value="Ribosomal_uL24_KOW"/>
</dbReference>
<dbReference type="InterPro" id="IPR008991">
    <property type="entry name" value="Translation_prot_SH3-like_sf"/>
</dbReference>
<dbReference type="NCBIfam" id="TIGR01079">
    <property type="entry name" value="rplX_bact"/>
    <property type="match status" value="1"/>
</dbReference>
<dbReference type="PANTHER" id="PTHR12903">
    <property type="entry name" value="MITOCHONDRIAL RIBOSOMAL PROTEIN L24"/>
    <property type="match status" value="1"/>
</dbReference>
<dbReference type="Pfam" id="PF00467">
    <property type="entry name" value="KOW"/>
    <property type="match status" value="1"/>
</dbReference>
<dbReference type="Pfam" id="PF17136">
    <property type="entry name" value="ribosomal_L24"/>
    <property type="match status" value="1"/>
</dbReference>
<dbReference type="SUPFAM" id="SSF50104">
    <property type="entry name" value="Translation proteins SH3-like domain"/>
    <property type="match status" value="1"/>
</dbReference>
<dbReference type="PROSITE" id="PS01108">
    <property type="entry name" value="RIBOSOMAL_L24"/>
    <property type="match status" value="1"/>
</dbReference>
<accession>A5CXL5</accession>
<reference key="1">
    <citation type="journal article" date="2007" name="Curr. Biol.">
        <title>Reduced genome of the thioautotrophic intracellular symbiont in a deep-sea clam, Calyptogena okutanii.</title>
        <authorList>
            <person name="Kuwahara H."/>
            <person name="Yoshida T."/>
            <person name="Takaki Y."/>
            <person name="Shimamura S."/>
            <person name="Nishi S."/>
            <person name="Harada M."/>
            <person name="Matsuyama K."/>
            <person name="Takishita K."/>
            <person name="Kawato M."/>
            <person name="Uematsu K."/>
            <person name="Fujiwara Y."/>
            <person name="Sato T."/>
            <person name="Kato C."/>
            <person name="Kitagawa M."/>
            <person name="Kato I."/>
            <person name="Maruyama T."/>
        </authorList>
    </citation>
    <scope>NUCLEOTIDE SEQUENCE [LARGE SCALE GENOMIC DNA]</scope>
    <source>
        <strain>HA</strain>
    </source>
</reference>